<keyword id="KW-0963">Cytoplasm</keyword>
<keyword id="KW-0396">Initiation factor</keyword>
<keyword id="KW-0648">Protein biosynthesis</keyword>
<keyword id="KW-0694">RNA-binding</keyword>
<keyword id="KW-0699">rRNA-binding</keyword>
<protein>
    <recommendedName>
        <fullName evidence="1">Translation initiation factor IF-1</fullName>
    </recommendedName>
</protein>
<dbReference type="EMBL" id="AE003849">
    <property type="protein sequence ID" value="AAF84254.1"/>
    <property type="molecule type" value="Genomic_DNA"/>
</dbReference>
<dbReference type="PIR" id="C82681">
    <property type="entry name" value="C82681"/>
</dbReference>
<dbReference type="RefSeq" id="WP_010893946.1">
    <property type="nucleotide sequence ID" value="NC_002488.3"/>
</dbReference>
<dbReference type="SMR" id="Q9PDD4"/>
<dbReference type="STRING" id="160492.XF_1445"/>
<dbReference type="KEGG" id="xfa:XF_1445"/>
<dbReference type="eggNOG" id="COG0361">
    <property type="taxonomic scope" value="Bacteria"/>
</dbReference>
<dbReference type="HOGENOM" id="CLU_151267_1_0_6"/>
<dbReference type="Proteomes" id="UP000000812">
    <property type="component" value="Chromosome"/>
</dbReference>
<dbReference type="GO" id="GO:0005829">
    <property type="term" value="C:cytosol"/>
    <property type="evidence" value="ECO:0007669"/>
    <property type="project" value="TreeGrafter"/>
</dbReference>
<dbReference type="GO" id="GO:0043022">
    <property type="term" value="F:ribosome binding"/>
    <property type="evidence" value="ECO:0007669"/>
    <property type="project" value="UniProtKB-UniRule"/>
</dbReference>
<dbReference type="GO" id="GO:0019843">
    <property type="term" value="F:rRNA binding"/>
    <property type="evidence" value="ECO:0007669"/>
    <property type="project" value="UniProtKB-UniRule"/>
</dbReference>
<dbReference type="GO" id="GO:0003743">
    <property type="term" value="F:translation initiation factor activity"/>
    <property type="evidence" value="ECO:0007669"/>
    <property type="project" value="UniProtKB-UniRule"/>
</dbReference>
<dbReference type="CDD" id="cd04451">
    <property type="entry name" value="S1_IF1"/>
    <property type="match status" value="1"/>
</dbReference>
<dbReference type="FunFam" id="2.40.50.140:FF:000002">
    <property type="entry name" value="Translation initiation factor IF-1"/>
    <property type="match status" value="1"/>
</dbReference>
<dbReference type="Gene3D" id="2.40.50.140">
    <property type="entry name" value="Nucleic acid-binding proteins"/>
    <property type="match status" value="1"/>
</dbReference>
<dbReference type="HAMAP" id="MF_00075">
    <property type="entry name" value="IF_1"/>
    <property type="match status" value="1"/>
</dbReference>
<dbReference type="InterPro" id="IPR012340">
    <property type="entry name" value="NA-bd_OB-fold"/>
</dbReference>
<dbReference type="InterPro" id="IPR006196">
    <property type="entry name" value="RNA-binding_domain_S1_IF1"/>
</dbReference>
<dbReference type="InterPro" id="IPR003029">
    <property type="entry name" value="S1_domain"/>
</dbReference>
<dbReference type="InterPro" id="IPR004368">
    <property type="entry name" value="TIF_IF1"/>
</dbReference>
<dbReference type="NCBIfam" id="TIGR00008">
    <property type="entry name" value="infA"/>
    <property type="match status" value="1"/>
</dbReference>
<dbReference type="PANTHER" id="PTHR33370">
    <property type="entry name" value="TRANSLATION INITIATION FACTOR IF-1, CHLOROPLASTIC"/>
    <property type="match status" value="1"/>
</dbReference>
<dbReference type="PANTHER" id="PTHR33370:SF1">
    <property type="entry name" value="TRANSLATION INITIATION FACTOR IF-1, CHLOROPLASTIC"/>
    <property type="match status" value="1"/>
</dbReference>
<dbReference type="Pfam" id="PF01176">
    <property type="entry name" value="eIF-1a"/>
    <property type="match status" value="1"/>
</dbReference>
<dbReference type="SMART" id="SM00316">
    <property type="entry name" value="S1"/>
    <property type="match status" value="1"/>
</dbReference>
<dbReference type="SUPFAM" id="SSF50249">
    <property type="entry name" value="Nucleic acid-binding proteins"/>
    <property type="match status" value="1"/>
</dbReference>
<dbReference type="PROSITE" id="PS50832">
    <property type="entry name" value="S1_IF1_TYPE"/>
    <property type="match status" value="1"/>
</dbReference>
<proteinExistence type="inferred from homology"/>
<accession>Q9PDD4</accession>
<gene>
    <name evidence="1" type="primary">infA</name>
    <name type="ordered locus">XF_1445</name>
</gene>
<evidence type="ECO:0000255" key="1">
    <source>
        <dbReference type="HAMAP-Rule" id="MF_00075"/>
    </source>
</evidence>
<name>IF1_XYLFA</name>
<feature type="chain" id="PRO_0000095911" description="Translation initiation factor IF-1">
    <location>
        <begin position="1"/>
        <end position="72"/>
    </location>
</feature>
<feature type="domain" description="S1-like" evidence="1">
    <location>
        <begin position="1"/>
        <end position="72"/>
    </location>
</feature>
<reference key="1">
    <citation type="journal article" date="2000" name="Nature">
        <title>The genome sequence of the plant pathogen Xylella fastidiosa.</title>
        <authorList>
            <person name="Simpson A.J.G."/>
            <person name="Reinach F.C."/>
            <person name="Arruda P."/>
            <person name="Abreu F.A."/>
            <person name="Acencio M."/>
            <person name="Alvarenga R."/>
            <person name="Alves L.M.C."/>
            <person name="Araya J.E."/>
            <person name="Baia G.S."/>
            <person name="Baptista C.S."/>
            <person name="Barros M.H."/>
            <person name="Bonaccorsi E.D."/>
            <person name="Bordin S."/>
            <person name="Bove J.M."/>
            <person name="Briones M.R.S."/>
            <person name="Bueno M.R.P."/>
            <person name="Camargo A.A."/>
            <person name="Camargo L.E.A."/>
            <person name="Carraro D.M."/>
            <person name="Carrer H."/>
            <person name="Colauto N.B."/>
            <person name="Colombo C."/>
            <person name="Costa F.F."/>
            <person name="Costa M.C.R."/>
            <person name="Costa-Neto C.M."/>
            <person name="Coutinho L.L."/>
            <person name="Cristofani M."/>
            <person name="Dias-Neto E."/>
            <person name="Docena C."/>
            <person name="El-Dorry H."/>
            <person name="Facincani A.P."/>
            <person name="Ferreira A.J.S."/>
            <person name="Ferreira V.C.A."/>
            <person name="Ferro J.A."/>
            <person name="Fraga J.S."/>
            <person name="Franca S.C."/>
            <person name="Franco M.C."/>
            <person name="Frohme M."/>
            <person name="Furlan L.R."/>
            <person name="Garnier M."/>
            <person name="Goldman G.H."/>
            <person name="Goldman M.H.S."/>
            <person name="Gomes S.L."/>
            <person name="Gruber A."/>
            <person name="Ho P.L."/>
            <person name="Hoheisel J.D."/>
            <person name="Junqueira M.L."/>
            <person name="Kemper E.L."/>
            <person name="Kitajima J.P."/>
            <person name="Krieger J.E."/>
            <person name="Kuramae E.E."/>
            <person name="Laigret F."/>
            <person name="Lambais M.R."/>
            <person name="Leite L.C.C."/>
            <person name="Lemos E.G.M."/>
            <person name="Lemos M.V.F."/>
            <person name="Lopes S.A."/>
            <person name="Lopes C.R."/>
            <person name="Machado J.A."/>
            <person name="Machado M.A."/>
            <person name="Madeira A.M.B.N."/>
            <person name="Madeira H.M.F."/>
            <person name="Marino C.L."/>
            <person name="Marques M.V."/>
            <person name="Martins E.A.L."/>
            <person name="Martins E.M.F."/>
            <person name="Matsukuma A.Y."/>
            <person name="Menck C.F.M."/>
            <person name="Miracca E.C."/>
            <person name="Miyaki C.Y."/>
            <person name="Monteiro-Vitorello C.B."/>
            <person name="Moon D.H."/>
            <person name="Nagai M.A."/>
            <person name="Nascimento A.L.T.O."/>
            <person name="Netto L.E.S."/>
            <person name="Nhani A. Jr."/>
            <person name="Nobrega F.G."/>
            <person name="Nunes L.R."/>
            <person name="Oliveira M.A."/>
            <person name="de Oliveira M.C."/>
            <person name="de Oliveira R.C."/>
            <person name="Palmieri D.A."/>
            <person name="Paris A."/>
            <person name="Peixoto B.R."/>
            <person name="Pereira G.A.G."/>
            <person name="Pereira H.A. Jr."/>
            <person name="Pesquero J.B."/>
            <person name="Quaggio R.B."/>
            <person name="Roberto P.G."/>
            <person name="Rodrigues V."/>
            <person name="de Rosa A.J.M."/>
            <person name="de Rosa V.E. Jr."/>
            <person name="de Sa R.G."/>
            <person name="Santelli R.V."/>
            <person name="Sawasaki H.E."/>
            <person name="da Silva A.C.R."/>
            <person name="da Silva A.M."/>
            <person name="da Silva F.R."/>
            <person name="Silva W.A. Jr."/>
            <person name="da Silveira J.F."/>
            <person name="Silvestri M.L.Z."/>
            <person name="Siqueira W.J."/>
            <person name="de Souza A.A."/>
            <person name="de Souza A.P."/>
            <person name="Terenzi M.F."/>
            <person name="Truffi D."/>
            <person name="Tsai S.M."/>
            <person name="Tsuhako M.H."/>
            <person name="Vallada H."/>
            <person name="Van Sluys M.A."/>
            <person name="Verjovski-Almeida S."/>
            <person name="Vettore A.L."/>
            <person name="Zago M.A."/>
            <person name="Zatz M."/>
            <person name="Meidanis J."/>
            <person name="Setubal J.C."/>
        </authorList>
    </citation>
    <scope>NUCLEOTIDE SEQUENCE [LARGE SCALE GENOMIC DNA]</scope>
    <source>
        <strain>9a5c</strain>
    </source>
</reference>
<sequence length="72" mass="8394">MSKDDCIEFEGTVSETLPNTTFRIKLENGHEVTAHISGRMRKNYIRILTGDRVKIEMTAYDLTKGRIIYRMK</sequence>
<organism>
    <name type="scientific">Xylella fastidiosa (strain 9a5c)</name>
    <dbReference type="NCBI Taxonomy" id="160492"/>
    <lineage>
        <taxon>Bacteria</taxon>
        <taxon>Pseudomonadati</taxon>
        <taxon>Pseudomonadota</taxon>
        <taxon>Gammaproteobacteria</taxon>
        <taxon>Lysobacterales</taxon>
        <taxon>Lysobacteraceae</taxon>
        <taxon>Xylella</taxon>
    </lineage>
</organism>
<comment type="function">
    <text evidence="1">One of the essential components for the initiation of protein synthesis. Stabilizes the binding of IF-2 and IF-3 on the 30S subunit to which N-formylmethionyl-tRNA(fMet) subsequently binds. Helps modulate mRNA selection, yielding the 30S pre-initiation complex (PIC). Upon addition of the 50S ribosomal subunit IF-1, IF-2 and IF-3 are released leaving the mature 70S translation initiation complex.</text>
</comment>
<comment type="subunit">
    <text evidence="1">Component of the 30S ribosomal translation pre-initiation complex which assembles on the 30S ribosome in the order IF-2 and IF-3, IF-1 and N-formylmethionyl-tRNA(fMet); mRNA recruitment can occur at any time during PIC assembly.</text>
</comment>
<comment type="subcellular location">
    <subcellularLocation>
        <location evidence="1">Cytoplasm</location>
    </subcellularLocation>
</comment>
<comment type="similarity">
    <text evidence="1">Belongs to the IF-1 family.</text>
</comment>